<organism>
    <name type="scientific">Trypanosoma brucei brucei</name>
    <dbReference type="NCBI Taxonomy" id="5702"/>
    <lineage>
        <taxon>Eukaryota</taxon>
        <taxon>Discoba</taxon>
        <taxon>Euglenozoa</taxon>
        <taxon>Kinetoplastea</taxon>
        <taxon>Metakinetoplastina</taxon>
        <taxon>Trypanosomatida</taxon>
        <taxon>Trypanosomatidae</taxon>
        <taxon>Trypanosoma</taxon>
    </lineage>
</organism>
<sequence length="482" mass="50807">LHPQQALAQTAGRPLADVVGKTLCTYSKTAKRQAANLAQTLQRASSAAKQSRQAQQLAALALAKLPDYKEAAATLLIYATHKIQDAQASIENWTGENTKLVGQAMYSSGRIDELMLLLEGHREDGANGQDKTCLGAAAGGNTVNEFVKTECDTESGHNIEADNSNIGQAATTLSQESTDPEASGGASCKITANLATDYDSHANELPLLGGLLTIHNAGGFKTGQSLQTAAPTNKLISALKNKGAGVAAKLATVTSAAPTSKQELKTLLASKGERAKLQAANDEYNNWKPGAKPEDFDAHIKKVFGAEDGKDSAYALALEGISIEVPQKPGTTESKQLYSMQPKDLMAALIGTIAEIQKAAATKAPCPKHKLTSAESDALCSKIKDANECNSKPFCSYNSTETDTAKKCQFNETKADKSGVSLPKTGPTGTEATTDKCKDKTKDECKSPNCKWEGETCKDSSILVTKKFALSLVSAAFASLLF</sequence>
<feature type="signal peptide">
    <location>
        <begin position="1" status="less than"/>
        <end position="8"/>
    </location>
</feature>
<feature type="chain" id="PRO_0000036411" description="Variant surface glycoprotein ANTAT 1.1C">
    <location>
        <begin position="9"/>
        <end position="459"/>
    </location>
</feature>
<feature type="propeptide" id="PRO_0000036412" description="Removed in mature form" evidence="1">
    <location>
        <begin position="460"/>
        <end position="482"/>
    </location>
</feature>
<feature type="lipid moiety-binding region" description="GPI-anchor amidated aspartate" evidence="1">
    <location>
        <position position="459"/>
    </location>
</feature>
<feature type="glycosylation site" description="N-linked (GlcNAc...) asparagine" evidence="2">
    <location>
        <position position="92"/>
    </location>
</feature>
<feature type="glycosylation site" description="N-linked (GlcNAc...) asparagine" evidence="2">
    <location>
        <position position="398"/>
    </location>
</feature>
<feature type="glycosylation site" description="N-linked (GlcNAc...) asparagine" evidence="2">
    <location>
        <position position="411"/>
    </location>
</feature>
<feature type="disulfide bond" evidence="1">
    <location>
        <begin position="24"/>
        <end position="151"/>
    </location>
</feature>
<feature type="disulfide bond" evidence="1">
    <location>
        <begin position="133"/>
        <end position="188"/>
    </location>
</feature>
<feature type="non-terminal residue">
    <location>
        <position position="1"/>
    </location>
</feature>
<dbReference type="EMBL" id="K01656">
    <property type="protein sequence ID" value="AAA30285.1"/>
    <property type="molecule type" value="Genomic_DNA"/>
</dbReference>
<dbReference type="SMR" id="P06016"/>
<dbReference type="GO" id="GO:0005886">
    <property type="term" value="C:plasma membrane"/>
    <property type="evidence" value="ECO:0007669"/>
    <property type="project" value="UniProtKB-SubCell"/>
</dbReference>
<dbReference type="GO" id="GO:0098552">
    <property type="term" value="C:side of membrane"/>
    <property type="evidence" value="ECO:0007669"/>
    <property type="project" value="UniProtKB-KW"/>
</dbReference>
<dbReference type="GO" id="GO:0042783">
    <property type="term" value="P:symbiont-mediated evasion of host immune response"/>
    <property type="evidence" value="ECO:0007669"/>
    <property type="project" value="InterPro"/>
</dbReference>
<dbReference type="Gene3D" id="3.30.1680.30">
    <property type="match status" value="1"/>
</dbReference>
<dbReference type="Gene3D" id="3.30.1680.40">
    <property type="match status" value="1"/>
</dbReference>
<dbReference type="Gene3D" id="3.90.150.10">
    <property type="entry name" value="Variant Surface Glycoprotein, subunit A domain 1"/>
    <property type="match status" value="1"/>
</dbReference>
<dbReference type="Gene3D" id="1.10.470.10">
    <property type="entry name" value="Variant Surface Glycoprotein, subunit A, domain 2"/>
    <property type="match status" value="1"/>
</dbReference>
<dbReference type="InterPro" id="IPR001812">
    <property type="entry name" value="Trypano_VSG_A_N_dom"/>
</dbReference>
<dbReference type="InterPro" id="IPR019609">
    <property type="entry name" value="Variant_surf_glycoprt_trypan_C"/>
</dbReference>
<dbReference type="Pfam" id="PF00913">
    <property type="entry name" value="Trypan_glycop"/>
    <property type="match status" value="1"/>
</dbReference>
<dbReference type="Pfam" id="PF10659">
    <property type="entry name" value="Trypan_glycop_C"/>
    <property type="match status" value="1"/>
</dbReference>
<dbReference type="SUPFAM" id="SSF58087">
    <property type="entry name" value="Variant surface glycoprotein (N-terminal domain)"/>
    <property type="match status" value="1"/>
</dbReference>
<proteinExistence type="inferred from homology"/>
<comment type="function">
    <text>VSG forms a coat on the surface of the parasite. The trypanosome evades the immune response of the host by expressing a series of antigenically distinct VSGs from an estimated 1000 VSG genes.</text>
</comment>
<comment type="subcellular location">
    <subcellularLocation>
        <location>Cell membrane</location>
        <topology>Lipid-anchor</topology>
        <topology>GPI-anchor</topology>
    </subcellularLocation>
    <text evidence="1">A soluble form is released from ruptured cells by the action of a PI-PLC.</text>
</comment>
<protein>
    <recommendedName>
        <fullName>Variant surface glycoprotein ANTAT 1.1C</fullName>
        <shortName>VSG</shortName>
    </recommendedName>
</protein>
<name>VSAC_TRYBB</name>
<evidence type="ECO:0000250" key="1"/>
<evidence type="ECO:0000255" key="2"/>
<reference key="1">
    <citation type="journal article" date="1983" name="Cell">
        <title>Modifications of a Trypanosoma b. brucei antigen gene repertoire by different DNA recombinational mechanisms.</title>
        <authorList>
            <person name="Pays E."/>
            <person name="Delauw M.-F."/>
            <person name="van Assel S."/>
            <person name="Laurent M."/>
            <person name="Vervoort T."/>
            <person name="van Meirvenne N."/>
            <person name="Steinert M."/>
        </authorList>
    </citation>
    <scope>NUCLEOTIDE SEQUENCE [GENOMIC DNA]</scope>
</reference>
<accession>P06016</accession>
<keyword id="KW-1003">Cell membrane</keyword>
<keyword id="KW-1015">Disulfide bond</keyword>
<keyword id="KW-0325">Glycoprotein</keyword>
<keyword id="KW-0336">GPI-anchor</keyword>
<keyword id="KW-0449">Lipoprotein</keyword>
<keyword id="KW-0472">Membrane</keyword>
<keyword id="KW-0732">Signal</keyword>
<keyword id="KW-0821">Trypanosomiasis</keyword>